<comment type="function">
    <text evidence="1">Catalyzes the hydrolytic deamination of adenosine and 2-deoxyadenosine.</text>
</comment>
<comment type="catalytic activity">
    <reaction evidence="1">
        <text>adenosine + H2O + H(+) = inosine + NH4(+)</text>
        <dbReference type="Rhea" id="RHEA:24408"/>
        <dbReference type="ChEBI" id="CHEBI:15377"/>
        <dbReference type="ChEBI" id="CHEBI:15378"/>
        <dbReference type="ChEBI" id="CHEBI:16335"/>
        <dbReference type="ChEBI" id="CHEBI:17596"/>
        <dbReference type="ChEBI" id="CHEBI:28938"/>
        <dbReference type="EC" id="3.5.4.4"/>
    </reaction>
    <physiologicalReaction direction="left-to-right" evidence="1">
        <dbReference type="Rhea" id="RHEA:24409"/>
    </physiologicalReaction>
</comment>
<comment type="catalytic activity">
    <reaction evidence="1">
        <text>2'-deoxyadenosine + H2O + H(+) = 2'-deoxyinosine + NH4(+)</text>
        <dbReference type="Rhea" id="RHEA:28190"/>
        <dbReference type="ChEBI" id="CHEBI:15377"/>
        <dbReference type="ChEBI" id="CHEBI:15378"/>
        <dbReference type="ChEBI" id="CHEBI:17256"/>
        <dbReference type="ChEBI" id="CHEBI:28938"/>
        <dbReference type="ChEBI" id="CHEBI:28997"/>
        <dbReference type="EC" id="3.5.4.4"/>
    </reaction>
    <physiologicalReaction direction="left-to-right" evidence="1">
        <dbReference type="Rhea" id="RHEA:28191"/>
    </physiologicalReaction>
</comment>
<comment type="cofactor">
    <cofactor evidence="1">
        <name>Zn(2+)</name>
        <dbReference type="ChEBI" id="CHEBI:29105"/>
    </cofactor>
    <text evidence="1">Binds 1 zinc ion per subunit.</text>
</comment>
<comment type="similarity">
    <text evidence="1">Belongs to the metallo-dependent hydrolases superfamily. Adenosine and AMP deaminases family. Adenosine deaminase subfamily.</text>
</comment>
<organism>
    <name type="scientific">Serratia proteamaculans (strain 568)</name>
    <dbReference type="NCBI Taxonomy" id="399741"/>
    <lineage>
        <taxon>Bacteria</taxon>
        <taxon>Pseudomonadati</taxon>
        <taxon>Pseudomonadota</taxon>
        <taxon>Gammaproteobacteria</taxon>
        <taxon>Enterobacterales</taxon>
        <taxon>Yersiniaceae</taxon>
        <taxon>Serratia</taxon>
    </lineage>
</organism>
<keyword id="KW-0378">Hydrolase</keyword>
<keyword id="KW-0479">Metal-binding</keyword>
<keyword id="KW-0546">Nucleotide metabolism</keyword>
<keyword id="KW-0862">Zinc</keyword>
<evidence type="ECO:0000255" key="1">
    <source>
        <dbReference type="HAMAP-Rule" id="MF_00540"/>
    </source>
</evidence>
<reference key="1">
    <citation type="submission" date="2007-09" db="EMBL/GenBank/DDBJ databases">
        <title>Complete sequence of chromosome of Serratia proteamaculans 568.</title>
        <authorList>
            <consortium name="US DOE Joint Genome Institute"/>
            <person name="Copeland A."/>
            <person name="Lucas S."/>
            <person name="Lapidus A."/>
            <person name="Barry K."/>
            <person name="Glavina del Rio T."/>
            <person name="Dalin E."/>
            <person name="Tice H."/>
            <person name="Pitluck S."/>
            <person name="Chain P."/>
            <person name="Malfatti S."/>
            <person name="Shin M."/>
            <person name="Vergez L."/>
            <person name="Schmutz J."/>
            <person name="Larimer F."/>
            <person name="Land M."/>
            <person name="Hauser L."/>
            <person name="Kyrpides N."/>
            <person name="Kim E."/>
            <person name="Taghavi S."/>
            <person name="Newman L."/>
            <person name="Vangronsveld J."/>
            <person name="van der Lelie D."/>
            <person name="Richardson P."/>
        </authorList>
    </citation>
    <scope>NUCLEOTIDE SEQUENCE [LARGE SCALE GENOMIC DNA]</scope>
    <source>
        <strain>568</strain>
    </source>
</reference>
<proteinExistence type="inferred from homology"/>
<protein>
    <recommendedName>
        <fullName evidence="1">Adenosine deaminase</fullName>
        <ecNumber evidence="1">3.5.4.4</ecNumber>
    </recommendedName>
    <alternativeName>
        <fullName evidence="1">Adenosine aminohydrolase</fullName>
    </alternativeName>
</protein>
<feature type="chain" id="PRO_1000061057" description="Adenosine deaminase">
    <location>
        <begin position="1"/>
        <end position="332"/>
    </location>
</feature>
<feature type="active site" description="Proton donor" evidence="1">
    <location>
        <position position="200"/>
    </location>
</feature>
<feature type="binding site" evidence="1">
    <location>
        <position position="12"/>
    </location>
    <ligand>
        <name>Zn(2+)</name>
        <dbReference type="ChEBI" id="CHEBI:29105"/>
        <note>catalytic</note>
    </ligand>
</feature>
<feature type="binding site" evidence="1">
    <location>
        <position position="14"/>
    </location>
    <ligand>
        <name>substrate</name>
    </ligand>
</feature>
<feature type="binding site" evidence="1">
    <location>
        <position position="14"/>
    </location>
    <ligand>
        <name>Zn(2+)</name>
        <dbReference type="ChEBI" id="CHEBI:29105"/>
        <note>catalytic</note>
    </ligand>
</feature>
<feature type="binding site" evidence="1">
    <location>
        <position position="16"/>
    </location>
    <ligand>
        <name>substrate</name>
    </ligand>
</feature>
<feature type="binding site" evidence="1">
    <location>
        <position position="170"/>
    </location>
    <ligand>
        <name>substrate</name>
    </ligand>
</feature>
<feature type="binding site" evidence="1">
    <location>
        <position position="197"/>
    </location>
    <ligand>
        <name>Zn(2+)</name>
        <dbReference type="ChEBI" id="CHEBI:29105"/>
        <note>catalytic</note>
    </ligand>
</feature>
<feature type="binding site" evidence="1">
    <location>
        <position position="278"/>
    </location>
    <ligand>
        <name>Zn(2+)</name>
        <dbReference type="ChEBI" id="CHEBI:29105"/>
        <note>catalytic</note>
    </ligand>
</feature>
<feature type="binding site" evidence="1">
    <location>
        <position position="279"/>
    </location>
    <ligand>
        <name>substrate</name>
    </ligand>
</feature>
<feature type="site" description="Important for catalytic activity" evidence="1">
    <location>
        <position position="221"/>
    </location>
</feature>
<accession>A8GE12</accession>
<sequence>MIDSRLPLTDIHRHLDGNIRAQTILDLGRQFNLALPADELEALRPHVQITHAEPDLVSFLQKLDWGVAVLGDLEACRRVAYENVEDAANAGLHYAELRFSPYYMAMKHQLPVTGVVEAVIDGIRSGSRDLGIDVRLIGIMSRTFGEAACLQELEGLLAHRDGITALDLAGDELGFPGGLFLNHFNRARDAGLRITVHAGEAAGPESIWQAIRELGAERIGHGVKAVEDPALMDFLAEHGIGIESCLTSNIQTSTVASLAQHPLAKFLRHGVMASINTDDPAVQGIEIEHEYLVAAPQAGLTPAEIRTAQENGLKMAFLSEQEKQTLRDKVRG</sequence>
<gene>
    <name evidence="1" type="primary">add</name>
    <name type="ordered locus">Spro_2251</name>
</gene>
<dbReference type="EC" id="3.5.4.4" evidence="1"/>
<dbReference type="EMBL" id="CP000826">
    <property type="protein sequence ID" value="ABV41352.1"/>
    <property type="molecule type" value="Genomic_DNA"/>
</dbReference>
<dbReference type="SMR" id="A8GE12"/>
<dbReference type="STRING" id="399741.Spro_2251"/>
<dbReference type="KEGG" id="spe:Spro_2251"/>
<dbReference type="eggNOG" id="COG1816">
    <property type="taxonomic scope" value="Bacteria"/>
</dbReference>
<dbReference type="HOGENOM" id="CLU_039228_0_2_6"/>
<dbReference type="OrthoDB" id="105475at2"/>
<dbReference type="GO" id="GO:0005829">
    <property type="term" value="C:cytosol"/>
    <property type="evidence" value="ECO:0007669"/>
    <property type="project" value="TreeGrafter"/>
</dbReference>
<dbReference type="GO" id="GO:0046936">
    <property type="term" value="F:2'-deoxyadenosine deaminase activity"/>
    <property type="evidence" value="ECO:0007669"/>
    <property type="project" value="RHEA"/>
</dbReference>
<dbReference type="GO" id="GO:0004000">
    <property type="term" value="F:adenosine deaminase activity"/>
    <property type="evidence" value="ECO:0007669"/>
    <property type="project" value="UniProtKB-UniRule"/>
</dbReference>
<dbReference type="GO" id="GO:0008270">
    <property type="term" value="F:zinc ion binding"/>
    <property type="evidence" value="ECO:0007669"/>
    <property type="project" value="UniProtKB-UniRule"/>
</dbReference>
<dbReference type="GO" id="GO:0006154">
    <property type="term" value="P:adenosine catabolic process"/>
    <property type="evidence" value="ECO:0007669"/>
    <property type="project" value="TreeGrafter"/>
</dbReference>
<dbReference type="GO" id="GO:0043103">
    <property type="term" value="P:hypoxanthine salvage"/>
    <property type="evidence" value="ECO:0007669"/>
    <property type="project" value="TreeGrafter"/>
</dbReference>
<dbReference type="GO" id="GO:0046103">
    <property type="term" value="P:inosine biosynthetic process"/>
    <property type="evidence" value="ECO:0007669"/>
    <property type="project" value="TreeGrafter"/>
</dbReference>
<dbReference type="GO" id="GO:0009117">
    <property type="term" value="P:nucleotide metabolic process"/>
    <property type="evidence" value="ECO:0007669"/>
    <property type="project" value="UniProtKB-KW"/>
</dbReference>
<dbReference type="GO" id="GO:0009168">
    <property type="term" value="P:purine ribonucleoside monophosphate biosynthetic process"/>
    <property type="evidence" value="ECO:0007669"/>
    <property type="project" value="UniProtKB-UniRule"/>
</dbReference>
<dbReference type="CDD" id="cd01320">
    <property type="entry name" value="ADA"/>
    <property type="match status" value="1"/>
</dbReference>
<dbReference type="FunFam" id="3.20.20.140:FF:000009">
    <property type="entry name" value="Adenosine deaminase"/>
    <property type="match status" value="1"/>
</dbReference>
<dbReference type="Gene3D" id="3.20.20.140">
    <property type="entry name" value="Metal-dependent hydrolases"/>
    <property type="match status" value="1"/>
</dbReference>
<dbReference type="HAMAP" id="MF_00540">
    <property type="entry name" value="A_deaminase"/>
    <property type="match status" value="1"/>
</dbReference>
<dbReference type="InterPro" id="IPR006650">
    <property type="entry name" value="A/AMP_deam_AS"/>
</dbReference>
<dbReference type="InterPro" id="IPR028893">
    <property type="entry name" value="A_deaminase"/>
</dbReference>
<dbReference type="InterPro" id="IPR001365">
    <property type="entry name" value="A_deaminase_dom"/>
</dbReference>
<dbReference type="InterPro" id="IPR006330">
    <property type="entry name" value="Ado/ade_deaminase"/>
</dbReference>
<dbReference type="InterPro" id="IPR032466">
    <property type="entry name" value="Metal_Hydrolase"/>
</dbReference>
<dbReference type="NCBIfam" id="TIGR01430">
    <property type="entry name" value="aden_deam"/>
    <property type="match status" value="1"/>
</dbReference>
<dbReference type="NCBIfam" id="NF006846">
    <property type="entry name" value="PRK09358.1-1"/>
    <property type="match status" value="1"/>
</dbReference>
<dbReference type="PANTHER" id="PTHR11409">
    <property type="entry name" value="ADENOSINE DEAMINASE"/>
    <property type="match status" value="1"/>
</dbReference>
<dbReference type="PANTHER" id="PTHR11409:SF43">
    <property type="entry name" value="ADENOSINE DEAMINASE"/>
    <property type="match status" value="1"/>
</dbReference>
<dbReference type="Pfam" id="PF00962">
    <property type="entry name" value="A_deaminase"/>
    <property type="match status" value="1"/>
</dbReference>
<dbReference type="SUPFAM" id="SSF51556">
    <property type="entry name" value="Metallo-dependent hydrolases"/>
    <property type="match status" value="1"/>
</dbReference>
<dbReference type="PROSITE" id="PS00485">
    <property type="entry name" value="A_DEAMINASE"/>
    <property type="match status" value="1"/>
</dbReference>
<name>ADD_SERP5</name>